<protein>
    <recommendedName>
        <fullName evidence="1">Nucleotide-binding protein CYA_0911</fullName>
    </recommendedName>
</protein>
<reference key="1">
    <citation type="journal article" date="2007" name="ISME J.">
        <title>Population level functional diversity in a microbial community revealed by comparative genomic and metagenomic analyses.</title>
        <authorList>
            <person name="Bhaya D."/>
            <person name="Grossman A.R."/>
            <person name="Steunou A.-S."/>
            <person name="Khuri N."/>
            <person name="Cohan F.M."/>
            <person name="Hamamura N."/>
            <person name="Melendrez M.C."/>
            <person name="Bateson M.M."/>
            <person name="Ward D.M."/>
            <person name="Heidelberg J.F."/>
        </authorList>
    </citation>
    <scope>NUCLEOTIDE SEQUENCE [LARGE SCALE GENOMIC DNA]</scope>
    <source>
        <strain>JA-3-3Ab</strain>
    </source>
</reference>
<proteinExistence type="inferred from homology"/>
<sequence>MDDQATRPTAATSPVLVIAGLTGSGKTLAIQQLEQLGYTGLEGIPPDQAVYLIEAIRPRHPALAVSLNLHTPEYREQFLAFDRWRQAQGIPFLFLEARPLVLLNRLSAHRRPHPHRPGLGLLEAIEQEVRDLAPVRERCTHLLDTSELNSQQLRQQLQALVHGIPQPLNLRLVSFGFKYGAPPDANLLFDVRFLPNPFFQPHLRHLTGQDPPLQEFLFADPVTQSTYRQIFSLVQAFWPHYRAERRPHLTVAIGCTGGQHRSVALVERLAEDLRPWAVPTDNPALPALNIQVQHRHLLDSQRELEARFGPPPPAAGVEQQQVRIPLAGVPAPPHD</sequence>
<gene>
    <name type="ordered locus">CYA_0911</name>
</gene>
<comment type="function">
    <text evidence="1">Displays ATPase and GTPase activities.</text>
</comment>
<comment type="similarity">
    <text evidence="1">Belongs to the RapZ-like family.</text>
</comment>
<feature type="chain" id="PRO_0000383297" description="Nucleotide-binding protein CYA_0911">
    <location>
        <begin position="1"/>
        <end position="335"/>
    </location>
</feature>
<feature type="region of interest" description="Disordered" evidence="2">
    <location>
        <begin position="306"/>
        <end position="335"/>
    </location>
</feature>
<feature type="binding site" evidence="1">
    <location>
        <begin position="20"/>
        <end position="27"/>
    </location>
    <ligand>
        <name>ATP</name>
        <dbReference type="ChEBI" id="CHEBI:30616"/>
    </ligand>
</feature>
<organism>
    <name type="scientific">Synechococcus sp. (strain JA-3-3Ab)</name>
    <name type="common">Cyanobacteria bacterium Yellowstone A-Prime</name>
    <dbReference type="NCBI Taxonomy" id="321327"/>
    <lineage>
        <taxon>Bacteria</taxon>
        <taxon>Bacillati</taxon>
        <taxon>Cyanobacteriota</taxon>
        <taxon>Cyanophyceae</taxon>
        <taxon>Synechococcales</taxon>
        <taxon>Synechococcaceae</taxon>
        <taxon>Synechococcus</taxon>
    </lineage>
</organism>
<name>Y911_SYNJA</name>
<dbReference type="EMBL" id="CP000239">
    <property type="protein sequence ID" value="ABC99113.1"/>
    <property type="molecule type" value="Genomic_DNA"/>
</dbReference>
<dbReference type="SMR" id="Q2JQQ0"/>
<dbReference type="STRING" id="321327.CYA_0911"/>
<dbReference type="KEGG" id="cya:CYA_0911"/>
<dbReference type="eggNOG" id="COG1660">
    <property type="taxonomic scope" value="Bacteria"/>
</dbReference>
<dbReference type="HOGENOM" id="CLU_059558_0_0_3"/>
<dbReference type="OrthoDB" id="9784461at2"/>
<dbReference type="Proteomes" id="UP000008818">
    <property type="component" value="Chromosome"/>
</dbReference>
<dbReference type="GO" id="GO:0005524">
    <property type="term" value="F:ATP binding"/>
    <property type="evidence" value="ECO:0007669"/>
    <property type="project" value="UniProtKB-UniRule"/>
</dbReference>
<dbReference type="GO" id="GO:0005525">
    <property type="term" value="F:GTP binding"/>
    <property type="evidence" value="ECO:0007669"/>
    <property type="project" value="UniProtKB-UniRule"/>
</dbReference>
<dbReference type="HAMAP" id="MF_00636">
    <property type="entry name" value="RapZ_like"/>
    <property type="match status" value="1"/>
</dbReference>
<dbReference type="InterPro" id="IPR027417">
    <property type="entry name" value="P-loop_NTPase"/>
</dbReference>
<dbReference type="InterPro" id="IPR005337">
    <property type="entry name" value="RapZ-like"/>
</dbReference>
<dbReference type="InterPro" id="IPR053930">
    <property type="entry name" value="RapZ-like_N"/>
</dbReference>
<dbReference type="InterPro" id="IPR053931">
    <property type="entry name" value="RapZ_C"/>
</dbReference>
<dbReference type="NCBIfam" id="NF003828">
    <property type="entry name" value="PRK05416.1"/>
    <property type="match status" value="1"/>
</dbReference>
<dbReference type="PANTHER" id="PTHR30448">
    <property type="entry name" value="RNASE ADAPTER PROTEIN RAPZ"/>
    <property type="match status" value="1"/>
</dbReference>
<dbReference type="PANTHER" id="PTHR30448:SF0">
    <property type="entry name" value="RNASE ADAPTER PROTEIN RAPZ"/>
    <property type="match status" value="1"/>
</dbReference>
<dbReference type="Pfam" id="PF22740">
    <property type="entry name" value="PapZ_C"/>
    <property type="match status" value="1"/>
</dbReference>
<dbReference type="Pfam" id="PF03668">
    <property type="entry name" value="RapZ-like_N"/>
    <property type="match status" value="1"/>
</dbReference>
<dbReference type="SUPFAM" id="SSF52540">
    <property type="entry name" value="P-loop containing nucleoside triphosphate hydrolases"/>
    <property type="match status" value="1"/>
</dbReference>
<keyword id="KW-0067">ATP-binding</keyword>
<keyword id="KW-0342">GTP-binding</keyword>
<keyword id="KW-0547">Nucleotide-binding</keyword>
<accession>Q2JQQ0</accession>
<evidence type="ECO:0000255" key="1">
    <source>
        <dbReference type="HAMAP-Rule" id="MF_00636"/>
    </source>
</evidence>
<evidence type="ECO:0000256" key="2">
    <source>
        <dbReference type="SAM" id="MobiDB-lite"/>
    </source>
</evidence>